<protein>
    <recommendedName>
        <fullName>Cytochrome c oxidase subunit 1</fullName>
        <ecNumber>7.1.1.9</ecNumber>
    </recommendedName>
    <alternativeName>
        <fullName>Cytochrome c oxidase polypeptide I</fullName>
    </alternativeName>
</protein>
<organism>
    <name type="scientific">Debaryomyces hansenii (strain ATCC 36239 / CBS 767 / BCRC 21394 / JCM 1990 / NBRC 0083 / IGC 2968)</name>
    <name type="common">Yeast</name>
    <name type="synonym">Torulaspora hansenii</name>
    <dbReference type="NCBI Taxonomy" id="284592"/>
    <lineage>
        <taxon>Eukaryota</taxon>
        <taxon>Fungi</taxon>
        <taxon>Dikarya</taxon>
        <taxon>Ascomycota</taxon>
        <taxon>Saccharomycotina</taxon>
        <taxon>Pichiomycetes</taxon>
        <taxon>Debaryomycetaceae</taxon>
        <taxon>Debaryomyces</taxon>
    </lineage>
</organism>
<accession>A9RAH5</accession>
<evidence type="ECO:0000250" key="1">
    <source>
        <dbReference type="UniProtKB" id="P00396"/>
    </source>
</evidence>
<evidence type="ECO:0000250" key="2">
    <source>
        <dbReference type="UniProtKB" id="P00401"/>
    </source>
</evidence>
<evidence type="ECO:0000255" key="3"/>
<evidence type="ECO:0000305" key="4"/>
<geneLocation type="mitochondrion"/>
<name>COX1_DEBHA</name>
<proteinExistence type="inferred from homology"/>
<keyword id="KW-0106">Calcium</keyword>
<keyword id="KW-0186">Copper</keyword>
<keyword id="KW-0249">Electron transport</keyword>
<keyword id="KW-0349">Heme</keyword>
<keyword id="KW-0408">Iron</keyword>
<keyword id="KW-0460">Magnesium</keyword>
<keyword id="KW-0472">Membrane</keyword>
<keyword id="KW-0479">Metal-binding</keyword>
<keyword id="KW-0496">Mitochondrion</keyword>
<keyword id="KW-0999">Mitochondrion inner membrane</keyword>
<keyword id="KW-1185">Reference proteome</keyword>
<keyword id="KW-0679">Respiratory chain</keyword>
<keyword id="KW-1278">Translocase</keyword>
<keyword id="KW-0812">Transmembrane</keyword>
<keyword id="KW-1133">Transmembrane helix</keyword>
<keyword id="KW-0813">Transport</keyword>
<comment type="function">
    <text evidence="2">Component of the cytochrome c oxidase, the last enzyme in the mitochondrial electron transport chain which drives oxidative phosphorylation. The respiratory chain contains 3 multisubunit complexes succinate dehydrogenase (complex II, CII), ubiquinol-cytochrome c oxidoreductase (cytochrome b-c1 complex, complex III, CIII) and cytochrome c oxidase (complex IV, CIV), that cooperate to transfer electrons derived from NADH and succinate to molecular oxygen, creating an electrochemical gradient over the inner membrane that drives transmembrane transport and the ATP synthase. Cytochrome c oxidase is the component of the respiratory chain that catalyzes the reduction of oxygen to water. Electrons originating from reduced cytochrome c in the intermembrane space (IMS) are transferred via the dinuclear copper A center (CU(A)) of subunit 2 and heme A of subunit 1 to the active site in subunit 1, a binuclear center (BNC) formed by heme A3 and copper B (CU(B)). The BNC reduces molecular oxygen to 2 water molecules using 4 electrons from cytochrome c in the IMS and 4 protons from the mitochondrial matrix.</text>
</comment>
<comment type="catalytic activity">
    <reaction evidence="2">
        <text>4 Fe(II)-[cytochrome c] + O2 + 8 H(+)(in) = 4 Fe(III)-[cytochrome c] + 2 H2O + 4 H(+)(out)</text>
        <dbReference type="Rhea" id="RHEA:11436"/>
        <dbReference type="Rhea" id="RHEA-COMP:10350"/>
        <dbReference type="Rhea" id="RHEA-COMP:14399"/>
        <dbReference type="ChEBI" id="CHEBI:15377"/>
        <dbReference type="ChEBI" id="CHEBI:15378"/>
        <dbReference type="ChEBI" id="CHEBI:15379"/>
        <dbReference type="ChEBI" id="CHEBI:29033"/>
        <dbReference type="ChEBI" id="CHEBI:29034"/>
        <dbReference type="EC" id="7.1.1.9"/>
    </reaction>
    <physiologicalReaction direction="left-to-right" evidence="2">
        <dbReference type="Rhea" id="RHEA:11437"/>
    </physiologicalReaction>
</comment>
<comment type="cofactor">
    <cofactor evidence="2">
        <name>heme</name>
        <dbReference type="ChEBI" id="CHEBI:30413"/>
    </cofactor>
    <text evidence="2">Binds 2 heme A groups non-covalently per subunit.</text>
</comment>
<comment type="cofactor">
    <cofactor evidence="2">
        <name>Cu cation</name>
        <dbReference type="ChEBI" id="CHEBI:23378"/>
    </cofactor>
    <text evidence="2">Binds a copper B center.</text>
</comment>
<comment type="pathway">
    <text evidence="2">Energy metabolism; oxidative phosphorylation.</text>
</comment>
<comment type="subunit">
    <text evidence="2">Component of the cytochrome c oxidase (complex IV, CIV), a multisubunit enzyme composed of a catalytic core of 3 subunits and several supernumerary subunits. The complex exists as a monomer or a dimer and forms supercomplexes (SCs) in the inner mitochondrial membrane with ubiquinol-cytochrome c oxidoreductase (cytochrome b-c1 complex, complex III, CIII).</text>
</comment>
<comment type="subcellular location">
    <subcellularLocation>
        <location evidence="2">Mitochondrion inner membrane</location>
        <topology evidence="2">Multi-pass membrane protein</topology>
    </subcellularLocation>
</comment>
<comment type="similarity">
    <text evidence="4">Belongs to the heme-copper respiratory oxidase family.</text>
</comment>
<reference key="1">
    <citation type="journal article" date="2008" name="FEMS Yeast Res.">
        <title>Promiscuous DNA in the nuclear genomes of hemiascomycetous yeasts.</title>
        <authorList>
            <person name="Sacerdot C."/>
            <person name="Casaregola S."/>
            <person name="Lafontaine I."/>
            <person name="Tekaia F."/>
            <person name="Dujon B."/>
            <person name="Ozier-Kalogeropoulos O."/>
        </authorList>
    </citation>
    <scope>NUCLEOTIDE SEQUENCE [LARGE SCALE GENOMIC DNA]</scope>
    <source>
        <strain>ATCC 36239 / CBS 767 / BCRC 21394 / JCM 1990 / NBRC 0083 / IGC 2968</strain>
    </source>
</reference>
<gene>
    <name type="primary">COX1</name>
</gene>
<feature type="chain" id="PRO_0000355031" description="Cytochrome c oxidase subunit 1">
    <location>
        <begin position="1"/>
        <end position="536"/>
    </location>
</feature>
<feature type="transmembrane region" description="Helical" evidence="3">
    <location>
        <begin position="19"/>
        <end position="39"/>
    </location>
</feature>
<feature type="transmembrane region" description="Helical" evidence="3">
    <location>
        <begin position="69"/>
        <end position="89"/>
    </location>
</feature>
<feature type="transmembrane region" description="Helical" evidence="3">
    <location>
        <begin position="103"/>
        <end position="123"/>
    </location>
</feature>
<feature type="transmembrane region" description="Helical" evidence="3">
    <location>
        <begin position="152"/>
        <end position="172"/>
    </location>
</feature>
<feature type="transmembrane region" description="Helical" evidence="3">
    <location>
        <begin position="188"/>
        <end position="208"/>
    </location>
</feature>
<feature type="transmembrane region" description="Helical" evidence="3">
    <location>
        <begin position="240"/>
        <end position="260"/>
    </location>
</feature>
<feature type="transmembrane region" description="Helical" evidence="3">
    <location>
        <begin position="273"/>
        <end position="293"/>
    </location>
</feature>
<feature type="transmembrane region" description="Helical" evidence="3">
    <location>
        <begin position="315"/>
        <end position="335"/>
    </location>
</feature>
<feature type="transmembrane region" description="Helical" evidence="3">
    <location>
        <begin position="341"/>
        <end position="361"/>
    </location>
</feature>
<feature type="transmembrane region" description="Helical" evidence="3">
    <location>
        <begin position="388"/>
        <end position="408"/>
    </location>
</feature>
<feature type="transmembrane region" description="Helical" evidence="3">
    <location>
        <begin position="418"/>
        <end position="438"/>
    </location>
</feature>
<feature type="transmembrane region" description="Helical" evidence="3">
    <location>
        <begin position="461"/>
        <end position="481"/>
    </location>
</feature>
<feature type="binding site" evidence="2">
    <location>
        <position position="44"/>
    </location>
    <ligand>
        <name>Ca(2+)</name>
        <dbReference type="ChEBI" id="CHEBI:29108"/>
    </ligand>
</feature>
<feature type="binding site" description="axial binding residue" evidence="2">
    <location>
        <position position="67"/>
    </location>
    <ligand>
        <name>Fe(II)-heme a</name>
        <dbReference type="ChEBI" id="CHEBI:61715"/>
        <note>low-spin</note>
    </ligand>
    <ligandPart>
        <name>Fe</name>
        <dbReference type="ChEBI" id="CHEBI:18248"/>
    </ligandPart>
</feature>
<feature type="binding site" evidence="2">
    <location>
        <position position="246"/>
    </location>
    <ligand>
        <name>Cu cation</name>
        <dbReference type="ChEBI" id="CHEBI:23378"/>
        <label>B</label>
    </ligand>
</feature>
<feature type="binding site" evidence="1">
    <location>
        <position position="250"/>
    </location>
    <ligand>
        <name>O2</name>
        <dbReference type="ChEBI" id="CHEBI:15379"/>
    </ligand>
</feature>
<feature type="binding site" evidence="2">
    <location>
        <position position="295"/>
    </location>
    <ligand>
        <name>Cu cation</name>
        <dbReference type="ChEBI" id="CHEBI:23378"/>
        <label>B</label>
    </ligand>
</feature>
<feature type="binding site" evidence="2">
    <location>
        <position position="296"/>
    </location>
    <ligand>
        <name>Cu cation</name>
        <dbReference type="ChEBI" id="CHEBI:23378"/>
        <label>B</label>
    </ligand>
</feature>
<feature type="binding site" evidence="2">
    <location>
        <position position="373"/>
    </location>
    <ligand>
        <name>Mg(2+)</name>
        <dbReference type="ChEBI" id="CHEBI:18420"/>
        <note>ligand shared with subunit 2</note>
    </ligand>
</feature>
<feature type="binding site" evidence="2">
    <location>
        <position position="374"/>
    </location>
    <ligand>
        <name>Mg(2+)</name>
        <dbReference type="ChEBI" id="CHEBI:18420"/>
        <note>ligand shared with subunit 2</note>
    </ligand>
</feature>
<feature type="binding site" description="axial binding residue" evidence="2">
    <location>
        <position position="381"/>
    </location>
    <ligand>
        <name>heme a3</name>
        <dbReference type="ChEBI" id="CHEBI:83282"/>
        <note>high-spin</note>
    </ligand>
    <ligandPart>
        <name>Fe</name>
        <dbReference type="ChEBI" id="CHEBI:18248"/>
    </ligandPart>
</feature>
<feature type="binding site" description="axial binding residue" evidence="2">
    <location>
        <position position="383"/>
    </location>
    <ligand>
        <name>Fe(II)-heme a</name>
        <dbReference type="ChEBI" id="CHEBI:61715"/>
        <note>low-spin</note>
    </ligand>
    <ligandPart>
        <name>Fe</name>
        <dbReference type="ChEBI" id="CHEBI:18248"/>
    </ligandPart>
</feature>
<feature type="binding site" evidence="2">
    <location>
        <position position="446"/>
    </location>
    <ligand>
        <name>Ca(2+)</name>
        <dbReference type="ChEBI" id="CHEBI:29108"/>
    </ligand>
</feature>
<feature type="cross-link" description="1'-histidyl-3'-tyrosine (His-Tyr)" evidence="2">
    <location>
        <begin position="246"/>
        <end position="250"/>
    </location>
</feature>
<sequence>MKQMSYVTRWLYSTSHKDIGMTYLGFGMLSAMMGTGMSVMMRMELSNGNSQFFHGNNQAFNVMMSGHALLMMFFFIMPVWMGAFGNFFLPMLMGAADMAFARLNNISFWCLPPALVCMVCSVLMEQGAGTGFTTYPPLSSMSAHSGPSVDLAMFAMHLTSMSSLLGAMNFMVTVLNMRTMGLHMVNMPLFAWAMFLTAMLLLLSLPVLTAAVTLLLMDRNFNTGFYEVGAGGDPVTYEHLFWFFGHPEVYILMMPGFGVMSHMVSTYSKKPMFGEMGMLYAMGSIGFLGFLVWSHHMFVVGLDIDSRAYFTSATMVIAVPTGIKIFSWLATIYGGELRLGVPMLFALGFLFLFTMGGLTGVMTSNASMDVAFHDTYYVVGHFHYVLSMGALFSLMGAYYYWGPAMFGLKYNRMLGEMHFWLLFMSVNVMFLPMHFLGLNGMPRRMPQYPDAFMGWNYMSSMGSAMSVMSVLVGLKSVLVQLENGENEELEMQVTPDFTESNLNREIRDSDLDLILTRPAEYHTYSELPVLTSNSHA</sequence>
<dbReference type="EC" id="7.1.1.9"/>
<dbReference type="EMBL" id="DQ508940">
    <property type="protein sequence ID" value="ABF58076.1"/>
    <property type="molecule type" value="Genomic_DNA"/>
</dbReference>
<dbReference type="RefSeq" id="YP_001621427.1">
    <property type="nucleotide sequence ID" value="NC_010166.1"/>
</dbReference>
<dbReference type="SMR" id="A9RAH5"/>
<dbReference type="FunCoup" id="A9RAH5">
    <property type="interactions" value="612"/>
</dbReference>
<dbReference type="STRING" id="284592.A9RAH5"/>
<dbReference type="GeneID" id="5845853"/>
<dbReference type="KEGG" id="dha:cox1"/>
<dbReference type="InParanoid" id="A9RAH5"/>
<dbReference type="UniPathway" id="UPA00705"/>
<dbReference type="Proteomes" id="UP000000599">
    <property type="component" value="Mitochondrion"/>
</dbReference>
<dbReference type="GO" id="GO:0005743">
    <property type="term" value="C:mitochondrial inner membrane"/>
    <property type="evidence" value="ECO:0007669"/>
    <property type="project" value="UniProtKB-SubCell"/>
</dbReference>
<dbReference type="GO" id="GO:0045277">
    <property type="term" value="C:respiratory chain complex IV"/>
    <property type="evidence" value="ECO:0007669"/>
    <property type="project" value="InterPro"/>
</dbReference>
<dbReference type="GO" id="GO:0004129">
    <property type="term" value="F:cytochrome-c oxidase activity"/>
    <property type="evidence" value="ECO:0007669"/>
    <property type="project" value="UniProtKB-EC"/>
</dbReference>
<dbReference type="GO" id="GO:0020037">
    <property type="term" value="F:heme binding"/>
    <property type="evidence" value="ECO:0007669"/>
    <property type="project" value="InterPro"/>
</dbReference>
<dbReference type="GO" id="GO:0046872">
    <property type="term" value="F:metal ion binding"/>
    <property type="evidence" value="ECO:0007669"/>
    <property type="project" value="UniProtKB-KW"/>
</dbReference>
<dbReference type="GO" id="GO:0015990">
    <property type="term" value="P:electron transport coupled proton transport"/>
    <property type="evidence" value="ECO:0007669"/>
    <property type="project" value="TreeGrafter"/>
</dbReference>
<dbReference type="GO" id="GO:0006123">
    <property type="term" value="P:mitochondrial electron transport, cytochrome c to oxygen"/>
    <property type="evidence" value="ECO:0007669"/>
    <property type="project" value="TreeGrafter"/>
</dbReference>
<dbReference type="CDD" id="cd01663">
    <property type="entry name" value="Cyt_c_Oxidase_I"/>
    <property type="match status" value="1"/>
</dbReference>
<dbReference type="FunFam" id="1.20.210.10:FF:000004">
    <property type="entry name" value="Cytochrome c oxidase subunit 1"/>
    <property type="match status" value="1"/>
</dbReference>
<dbReference type="Gene3D" id="1.20.210.10">
    <property type="entry name" value="Cytochrome c oxidase-like, subunit I domain"/>
    <property type="match status" value="1"/>
</dbReference>
<dbReference type="InterPro" id="IPR023616">
    <property type="entry name" value="Cyt_c_oxase-like_su1_dom"/>
</dbReference>
<dbReference type="InterPro" id="IPR036927">
    <property type="entry name" value="Cyt_c_oxase-like_su1_sf"/>
</dbReference>
<dbReference type="InterPro" id="IPR000883">
    <property type="entry name" value="Cyt_C_Oxase_1"/>
</dbReference>
<dbReference type="InterPro" id="IPR023615">
    <property type="entry name" value="Cyt_c_Oxase_su1_BS"/>
</dbReference>
<dbReference type="InterPro" id="IPR033944">
    <property type="entry name" value="Cyt_c_oxase_su1_dom"/>
</dbReference>
<dbReference type="PANTHER" id="PTHR10422">
    <property type="entry name" value="CYTOCHROME C OXIDASE SUBUNIT 1"/>
    <property type="match status" value="1"/>
</dbReference>
<dbReference type="PANTHER" id="PTHR10422:SF18">
    <property type="entry name" value="CYTOCHROME C OXIDASE SUBUNIT 1"/>
    <property type="match status" value="1"/>
</dbReference>
<dbReference type="Pfam" id="PF00115">
    <property type="entry name" value="COX1"/>
    <property type="match status" value="1"/>
</dbReference>
<dbReference type="PRINTS" id="PR01165">
    <property type="entry name" value="CYCOXIDASEI"/>
</dbReference>
<dbReference type="SUPFAM" id="SSF81442">
    <property type="entry name" value="Cytochrome c oxidase subunit I-like"/>
    <property type="match status" value="1"/>
</dbReference>
<dbReference type="PROSITE" id="PS50855">
    <property type="entry name" value="COX1"/>
    <property type="match status" value="1"/>
</dbReference>
<dbReference type="PROSITE" id="PS00077">
    <property type="entry name" value="COX1_CUB"/>
    <property type="match status" value="1"/>
</dbReference>